<proteinExistence type="evidence at protein level"/>
<gene>
    <name type="primary">BCS1L</name>
    <name evidence="14" type="synonym">BCS1</name>
</gene>
<feature type="initiator methionine" description="Removed" evidence="17">
    <location>
        <position position="1"/>
    </location>
</feature>
<feature type="chain" id="PRO_0000084772" description="Mitochondrial chaperone BCS1">
    <location>
        <begin position="2"/>
        <end position="419"/>
    </location>
</feature>
<feature type="topological domain" description="Mitochondrial intermembrane" evidence="2">
    <location>
        <begin position="2"/>
        <end position="15"/>
    </location>
</feature>
<feature type="transmembrane region" description="Helical" evidence="2">
    <location>
        <begin position="16"/>
        <end position="32"/>
    </location>
</feature>
<feature type="topological domain" description="Mitochondrial matrix" evidence="2">
    <location>
        <begin position="33"/>
        <end position="419"/>
    </location>
</feature>
<feature type="binding site" evidence="2">
    <location>
        <begin position="230"/>
        <end position="237"/>
    </location>
    <ligand>
        <name>ATP</name>
        <dbReference type="ChEBI" id="CHEBI:30616"/>
    </ligand>
</feature>
<feature type="modified residue" description="Phosphotyrosine" evidence="16">
    <location>
        <position position="181"/>
    </location>
</feature>
<feature type="sequence variant" id="VAR_032086" description="In BJS; with mild mitochondrial complex III deficiency; dbSNP:rs121908579." evidence="6">
    <original>G</original>
    <variation>R</variation>
    <location>
        <position position="35"/>
    </location>
</feature>
<feature type="sequence variant" id="VAR_032087" description="In MC3DN1; dbSNP:rs121908575." evidence="5">
    <original>R</original>
    <variation>C</variation>
    <location>
        <position position="45"/>
    </location>
</feature>
<feature type="sequence variant" id="VAR_064615" description="In MC3DN1; dbSNP:rs121908580." evidence="9">
    <original>T</original>
    <variation>A</variation>
    <location>
        <position position="50"/>
    </location>
</feature>
<feature type="sequence variant" id="VAR_064616" description="In MC3DN1; dbSNP:rs140812286." evidence="7">
    <original>R</original>
    <variation>C</variation>
    <location>
        <position position="73"/>
    </location>
</feature>
<feature type="sequence variant" id="VAR_018149" description="In GRACILE and MC3DN1; dbSNP:rs28937590." evidence="4 6 12">
    <original>S</original>
    <variation>G</variation>
    <location>
        <position position="78"/>
    </location>
</feature>
<feature type="sequence variant" id="VAR_018159" description="In MC3DN1; dbSNP:rs121908572." evidence="3 6">
    <original>P</original>
    <variation>L</variation>
    <location>
        <position position="99"/>
    </location>
</feature>
<feature type="sequence variant" id="VAR_032088" description="In BJS; dbSNP:rs778769841." evidence="6">
    <original>R</original>
    <variation>W</variation>
    <location>
        <position position="114"/>
    </location>
</feature>
<feature type="sequence variant" id="VAR_072243" description="In MC3DN1; dbSNP:rs1057521059." evidence="10">
    <original>G</original>
    <variation>R</variation>
    <location>
        <position position="129"/>
    </location>
</feature>
<feature type="sequence variant" id="VAR_018160" description="In GRACILE; dbSNP:rs386833857." evidence="4 6">
    <original>R</original>
    <variation>Q</variation>
    <location>
        <position position="144"/>
    </location>
</feature>
<feature type="sequence variant" id="VAR_018161" description="In MC3DN1; abolishes interaction with LETM1; dbSNP:rs121908573." evidence="3 6 8">
    <original>R</original>
    <variation>P</variation>
    <location>
        <position position="155"/>
    </location>
</feature>
<feature type="sequence variant" id="VAR_064617" description="In MC3DN1; causes a decreased incorporation of the Rieske iron-sulfur protein UQCRFS1 into complex III; dbSNP:rs144885874." evidence="7">
    <original>R</original>
    <variation>C</variation>
    <location>
        <position position="183"/>
    </location>
</feature>
<feature type="sequence variant" id="VAR_032089" description="In BJS; dbSNP:rs121908577." evidence="6">
    <original>R</original>
    <variation>H</variation>
    <location>
        <position position="183"/>
    </location>
</feature>
<feature type="sequence variant" id="VAR_032090" description="In MC3DN1 and BJS; with mild mitochondrial complex III deficiency; causes a decreased incorporation of the Rieske iron-sulfur protein UQCRFS1 into complex III; dbSNP:rs121908578." evidence="6 7">
    <original>R</original>
    <variation>C</variation>
    <location>
        <position position="184"/>
    </location>
</feature>
<feature type="sequence variant" id="VAR_018162" description="In MC3DN1; dbSNP:rs121908571." evidence="3 6">
    <original>S</original>
    <variation>N</variation>
    <location>
        <position position="277"/>
    </location>
</feature>
<feature type="sequence variant" id="VAR_072244" description="In BJS; dbSNP:rs587777278." evidence="11">
    <original>Y</original>
    <variation>N</variation>
    <location>
        <position position="301"/>
    </location>
</feature>
<feature type="sequence variant" id="VAR_032091" description="In BJS; dbSNP:rs1457171169." evidence="6">
    <original>Q</original>
    <variation>E</variation>
    <location>
        <position position="302"/>
    </location>
</feature>
<feature type="sequence variant" id="VAR_032092" description="In BJS; dbSNP:rs1280810181." evidence="6">
    <original>R</original>
    <variation>H</variation>
    <location>
        <position position="306"/>
    </location>
</feature>
<feature type="sequence variant" id="VAR_018163" description="In GRACILE; dbSNP:rs386833858." evidence="4 6">
    <original>V</original>
    <variation>A</variation>
    <location>
        <position position="327"/>
    </location>
</feature>
<feature type="sequence variant" id="VAR_018164" description="In MC3DN1; dbSNP:rs121908574." evidence="3 6">
    <original>V</original>
    <variation>M</variation>
    <location>
        <position position="353"/>
    </location>
</feature>
<feature type="sequence variant" id="VAR_064618" description="In MC3DN1." evidence="7">
    <original>F</original>
    <variation>I</variation>
    <location>
        <position position="368"/>
    </location>
</feature>
<feature type="sequence conflict" description="In Ref. 6; CAE11877." evidence="15" ref="6">
    <original>A</original>
    <variation>T</variation>
    <location>
        <position position="394"/>
    </location>
</feature>
<dbReference type="EC" id="3.6.1.-" evidence="1"/>
<dbReference type="EMBL" id="AF026849">
    <property type="protein sequence ID" value="AAD08638.1"/>
    <property type="molecule type" value="mRNA"/>
</dbReference>
<dbReference type="EMBL" id="AF346835">
    <property type="protein sequence ID" value="AAK29417.1"/>
    <property type="molecule type" value="Genomic_DNA"/>
</dbReference>
<dbReference type="EMBL" id="AF516670">
    <property type="protein sequence ID" value="AAN05490.1"/>
    <property type="molecule type" value="Genomic_DNA"/>
</dbReference>
<dbReference type="EMBL" id="AF038195">
    <property type="protein sequence ID" value="AAB97365.1"/>
    <property type="molecule type" value="mRNA"/>
</dbReference>
<dbReference type="EMBL" id="AK096210">
    <property type="protein sequence ID" value="BAG53231.1"/>
    <property type="molecule type" value="mRNA"/>
</dbReference>
<dbReference type="EMBL" id="BX571752">
    <property type="protein sequence ID" value="CAE11877.1"/>
    <property type="molecule type" value="mRNA"/>
</dbReference>
<dbReference type="EMBL" id="CH471063">
    <property type="protein sequence ID" value="EAW70634.1"/>
    <property type="molecule type" value="Genomic_DNA"/>
</dbReference>
<dbReference type="EMBL" id="BC000416">
    <property type="protein sequence ID" value="AAH00416.1"/>
    <property type="molecule type" value="mRNA"/>
</dbReference>
<dbReference type="EMBL" id="BC007500">
    <property type="protein sequence ID" value="AAH07500.1"/>
    <property type="molecule type" value="mRNA"/>
</dbReference>
<dbReference type="CCDS" id="CCDS2419.1"/>
<dbReference type="RefSeq" id="NP_001073335.1">
    <property type="nucleotide sequence ID" value="NM_001079866.2"/>
</dbReference>
<dbReference type="RefSeq" id="NP_001244271.1">
    <property type="nucleotide sequence ID" value="NM_001257342.2"/>
</dbReference>
<dbReference type="RefSeq" id="NP_001244272.1">
    <property type="nucleotide sequence ID" value="NM_001257343.2"/>
</dbReference>
<dbReference type="RefSeq" id="NP_001244273.1">
    <property type="nucleotide sequence ID" value="NM_001257344.2"/>
</dbReference>
<dbReference type="RefSeq" id="NP_001305765.1">
    <property type="nucleotide sequence ID" value="NM_001318836.1"/>
</dbReference>
<dbReference type="RefSeq" id="NP_001307646.1">
    <property type="nucleotide sequence ID" value="NM_001320717.2"/>
</dbReference>
<dbReference type="RefSeq" id="NP_001358372.1">
    <property type="nucleotide sequence ID" value="NM_001371443.1"/>
</dbReference>
<dbReference type="RefSeq" id="NP_001358373.1">
    <property type="nucleotide sequence ID" value="NM_001371444.1"/>
</dbReference>
<dbReference type="RefSeq" id="NP_001358375.1">
    <property type="nucleotide sequence ID" value="NM_001371446.1"/>
</dbReference>
<dbReference type="RefSeq" id="NP_001358376.1">
    <property type="nucleotide sequence ID" value="NM_001371447.1"/>
</dbReference>
<dbReference type="RefSeq" id="NP_001358377.1">
    <property type="nucleotide sequence ID" value="NM_001371448.1"/>
</dbReference>
<dbReference type="RefSeq" id="NP_001358378.1">
    <property type="nucleotide sequence ID" value="NM_001371449.1"/>
</dbReference>
<dbReference type="RefSeq" id="NP_001358379.1">
    <property type="nucleotide sequence ID" value="NM_001371450.1"/>
</dbReference>
<dbReference type="RefSeq" id="NP_001361014.1">
    <property type="nucleotide sequence ID" value="NM_001374085.1"/>
</dbReference>
<dbReference type="RefSeq" id="NP_004319.1">
    <property type="nucleotide sequence ID" value="NM_004328.5"/>
</dbReference>
<dbReference type="RefSeq" id="XP_006712741.1">
    <property type="nucleotide sequence ID" value="XM_006712678.1"/>
</dbReference>
<dbReference type="RefSeq" id="XP_016860120.1">
    <property type="nucleotide sequence ID" value="XM_017004631.1"/>
</dbReference>
<dbReference type="RefSeq" id="XP_016860121.1">
    <property type="nucleotide sequence ID" value="XM_017004632.1"/>
</dbReference>
<dbReference type="RefSeq" id="XP_047301340.1">
    <property type="nucleotide sequence ID" value="XM_047445384.1"/>
</dbReference>
<dbReference type="RefSeq" id="XP_047301341.1">
    <property type="nucleotide sequence ID" value="XM_047445385.1"/>
</dbReference>
<dbReference type="RefSeq" id="XP_047301343.1">
    <property type="nucleotide sequence ID" value="XM_047445387.1"/>
</dbReference>
<dbReference type="RefSeq" id="XP_047301344.1">
    <property type="nucleotide sequence ID" value="XM_047445388.1"/>
</dbReference>
<dbReference type="RefSeq" id="XP_047301345.1">
    <property type="nucleotide sequence ID" value="XM_047445389.1"/>
</dbReference>
<dbReference type="RefSeq" id="XP_054199262.1">
    <property type="nucleotide sequence ID" value="XM_054343287.1"/>
</dbReference>
<dbReference type="RefSeq" id="XP_054199263.1">
    <property type="nucleotide sequence ID" value="XM_054343288.1"/>
</dbReference>
<dbReference type="RefSeq" id="XP_054199264.1">
    <property type="nucleotide sequence ID" value="XM_054343289.1"/>
</dbReference>
<dbReference type="RefSeq" id="XP_054199265.1">
    <property type="nucleotide sequence ID" value="XM_054343290.1"/>
</dbReference>
<dbReference type="SMR" id="Q9Y276"/>
<dbReference type="BioGRID" id="107087">
    <property type="interactions" value="116"/>
</dbReference>
<dbReference type="FunCoup" id="Q9Y276">
    <property type="interactions" value="663"/>
</dbReference>
<dbReference type="IntAct" id="Q9Y276">
    <property type="interactions" value="42"/>
</dbReference>
<dbReference type="MINT" id="Q9Y276"/>
<dbReference type="STRING" id="9606.ENSP00000413908"/>
<dbReference type="TCDB" id="3.A.28.1.5">
    <property type="family name" value="the aaa-atpase, bcs1 (bcs1) family"/>
</dbReference>
<dbReference type="GlyGen" id="Q9Y276">
    <property type="glycosylation" value="1 site, 1 O-linked glycan (1 site)"/>
</dbReference>
<dbReference type="iPTMnet" id="Q9Y276"/>
<dbReference type="PhosphoSitePlus" id="Q9Y276"/>
<dbReference type="SwissPalm" id="Q9Y276"/>
<dbReference type="BioMuta" id="BCS1L"/>
<dbReference type="DMDM" id="46397351"/>
<dbReference type="jPOST" id="Q9Y276"/>
<dbReference type="MassIVE" id="Q9Y276"/>
<dbReference type="PaxDb" id="9606-ENSP00000413908"/>
<dbReference type="PeptideAtlas" id="Q9Y276"/>
<dbReference type="ProteomicsDB" id="85679"/>
<dbReference type="Pumba" id="Q9Y276"/>
<dbReference type="Antibodypedia" id="34281">
    <property type="antibodies" value="124 antibodies from 22 providers"/>
</dbReference>
<dbReference type="DNASU" id="617"/>
<dbReference type="Ensembl" id="ENST00000359273.8">
    <property type="protein sequence ID" value="ENSP00000352219.3"/>
    <property type="gene ID" value="ENSG00000074582.15"/>
</dbReference>
<dbReference type="Ensembl" id="ENST00000392109.5">
    <property type="protein sequence ID" value="ENSP00000375957.1"/>
    <property type="gene ID" value="ENSG00000074582.15"/>
</dbReference>
<dbReference type="Ensembl" id="ENST00000392110.6">
    <property type="protein sequence ID" value="ENSP00000375958.2"/>
    <property type="gene ID" value="ENSG00000074582.15"/>
</dbReference>
<dbReference type="Ensembl" id="ENST00000392111.7">
    <property type="protein sequence ID" value="ENSP00000375959.2"/>
    <property type="gene ID" value="ENSG00000074582.15"/>
</dbReference>
<dbReference type="Ensembl" id="ENST00000412366.5">
    <property type="protein sequence ID" value="ENSP00000406494.1"/>
    <property type="gene ID" value="ENSG00000074582.15"/>
</dbReference>
<dbReference type="Ensembl" id="ENST00000431802.5">
    <property type="protein sequence ID" value="ENSP00000413908.1"/>
    <property type="gene ID" value="ENSG00000074582.15"/>
</dbReference>
<dbReference type="Ensembl" id="ENST00000439945.5">
    <property type="protein sequence ID" value="ENSP00000404999.1"/>
    <property type="gene ID" value="ENSG00000074582.15"/>
</dbReference>
<dbReference type="GeneID" id="617"/>
<dbReference type="KEGG" id="hsa:617"/>
<dbReference type="MANE-Select" id="ENST00000359273.8">
    <property type="protein sequence ID" value="ENSP00000352219.3"/>
    <property type="RefSeq nucleotide sequence ID" value="NM_001079866.2"/>
    <property type="RefSeq protein sequence ID" value="NP_001073335.1"/>
</dbReference>
<dbReference type="UCSC" id="uc002vip.4">
    <property type="organism name" value="human"/>
</dbReference>
<dbReference type="AGR" id="HGNC:1020"/>
<dbReference type="CTD" id="617"/>
<dbReference type="DisGeNET" id="617"/>
<dbReference type="GeneCards" id="BCS1L"/>
<dbReference type="GeneReviews" id="BCS1L"/>
<dbReference type="HGNC" id="HGNC:1020">
    <property type="gene designation" value="BCS1L"/>
</dbReference>
<dbReference type="HPA" id="ENSG00000074582">
    <property type="expression patterns" value="Low tissue specificity"/>
</dbReference>
<dbReference type="MalaCards" id="BCS1L"/>
<dbReference type="MIM" id="124000">
    <property type="type" value="phenotype"/>
</dbReference>
<dbReference type="MIM" id="262000">
    <property type="type" value="phenotype"/>
</dbReference>
<dbReference type="MIM" id="603358">
    <property type="type" value="phenotype"/>
</dbReference>
<dbReference type="MIM" id="603647">
    <property type="type" value="gene"/>
</dbReference>
<dbReference type="neXtProt" id="NX_Q9Y276"/>
<dbReference type="OpenTargets" id="ENSG00000074582"/>
<dbReference type="Orphanet" id="123">
    <property type="disease" value="Bjoernstad syndrome"/>
</dbReference>
<dbReference type="Orphanet" id="53693">
    <property type="disease" value="GRACILE syndrome"/>
</dbReference>
<dbReference type="Orphanet" id="1460">
    <property type="disease" value="Isolated complex III deficiency"/>
</dbReference>
<dbReference type="Orphanet" id="254902">
    <property type="disease" value="Renal tubulopathy-encephalopathy-liver failure syndrome"/>
</dbReference>
<dbReference type="PharmGKB" id="PA25327"/>
<dbReference type="VEuPathDB" id="HostDB:ENSG00000074582"/>
<dbReference type="eggNOG" id="KOG0743">
    <property type="taxonomic scope" value="Eukaryota"/>
</dbReference>
<dbReference type="GeneTree" id="ENSGT00390000005415"/>
<dbReference type="HOGENOM" id="CLU_010189_6_2_1"/>
<dbReference type="InParanoid" id="Q9Y276"/>
<dbReference type="OMA" id="WMTLYQR"/>
<dbReference type="OrthoDB" id="10251412at2759"/>
<dbReference type="PAN-GO" id="Q9Y276">
    <property type="GO annotations" value="3 GO annotations based on evolutionary models"/>
</dbReference>
<dbReference type="PhylomeDB" id="Q9Y276"/>
<dbReference type="TreeFam" id="TF315009"/>
<dbReference type="PathwayCommons" id="Q9Y276"/>
<dbReference type="Reactome" id="R-HSA-1268020">
    <property type="pathway name" value="Mitochondrial protein import"/>
</dbReference>
<dbReference type="Reactome" id="R-HSA-9865881">
    <property type="pathway name" value="Complex III assembly"/>
</dbReference>
<dbReference type="SignaLink" id="Q9Y276"/>
<dbReference type="SIGNOR" id="Q9Y276"/>
<dbReference type="BioGRID-ORCS" id="617">
    <property type="hits" value="368 hits in 1170 CRISPR screens"/>
</dbReference>
<dbReference type="CD-CODE" id="91857CE7">
    <property type="entry name" value="Nucleolus"/>
</dbReference>
<dbReference type="GeneWiki" id="BCS1L"/>
<dbReference type="GenomeRNAi" id="617"/>
<dbReference type="Pharos" id="Q9Y276">
    <property type="development level" value="Tbio"/>
</dbReference>
<dbReference type="PRO" id="PR:Q9Y276"/>
<dbReference type="Proteomes" id="UP000005640">
    <property type="component" value="Chromosome 2"/>
</dbReference>
<dbReference type="RNAct" id="Q9Y276">
    <property type="molecule type" value="protein"/>
</dbReference>
<dbReference type="Bgee" id="ENSG00000074582">
    <property type="expression patterns" value="Expressed in body of pancreas and 194 other cell types or tissues"/>
</dbReference>
<dbReference type="ExpressionAtlas" id="Q9Y276">
    <property type="expression patterns" value="baseline and differential"/>
</dbReference>
<dbReference type="GO" id="GO:0005743">
    <property type="term" value="C:mitochondrial inner membrane"/>
    <property type="evidence" value="ECO:0000318"/>
    <property type="project" value="GO_Central"/>
</dbReference>
<dbReference type="GO" id="GO:0005739">
    <property type="term" value="C:mitochondrion"/>
    <property type="evidence" value="ECO:0000314"/>
    <property type="project" value="UniProtKB"/>
</dbReference>
<dbReference type="GO" id="GO:0045275">
    <property type="term" value="C:respiratory chain complex III"/>
    <property type="evidence" value="ECO:0000304"/>
    <property type="project" value="ProtInc"/>
</dbReference>
<dbReference type="GO" id="GO:0005524">
    <property type="term" value="F:ATP binding"/>
    <property type="evidence" value="ECO:0007669"/>
    <property type="project" value="UniProtKB-KW"/>
</dbReference>
<dbReference type="GO" id="GO:0016887">
    <property type="term" value="F:ATP hydrolysis activity"/>
    <property type="evidence" value="ECO:0007669"/>
    <property type="project" value="Ensembl"/>
</dbReference>
<dbReference type="GO" id="GO:0033617">
    <property type="term" value="P:mitochondrial cytochrome c oxidase assembly"/>
    <property type="evidence" value="ECO:0000315"/>
    <property type="project" value="UniProtKB"/>
</dbReference>
<dbReference type="GO" id="GO:0032981">
    <property type="term" value="P:mitochondrial respiratory chain complex I assembly"/>
    <property type="evidence" value="ECO:0000315"/>
    <property type="project" value="UniProtKB"/>
</dbReference>
<dbReference type="GO" id="GO:0034551">
    <property type="term" value="P:mitochondrial respiratory chain complex III assembly"/>
    <property type="evidence" value="ECO:0000315"/>
    <property type="project" value="UniProtKB"/>
</dbReference>
<dbReference type="GO" id="GO:0007005">
    <property type="term" value="P:mitochondrion organization"/>
    <property type="evidence" value="ECO:0000315"/>
    <property type="project" value="UniProtKB"/>
</dbReference>
<dbReference type="GO" id="GO:0032979">
    <property type="term" value="P:protein insertion into mitochondrial inner membrane from matrix"/>
    <property type="evidence" value="ECO:0000318"/>
    <property type="project" value="GO_Central"/>
</dbReference>
<dbReference type="CDD" id="cd19510">
    <property type="entry name" value="RecA-like_BCS1"/>
    <property type="match status" value="1"/>
</dbReference>
<dbReference type="FunFam" id="3.40.50.300:FF:000768">
    <property type="entry name" value="Probable mitochondrial chaperone bcs1"/>
    <property type="match status" value="1"/>
</dbReference>
<dbReference type="Gene3D" id="3.40.50.300">
    <property type="entry name" value="P-loop containing nucleotide triphosphate hydrolases"/>
    <property type="match status" value="1"/>
</dbReference>
<dbReference type="InterPro" id="IPR003593">
    <property type="entry name" value="AAA+_ATPase"/>
</dbReference>
<dbReference type="InterPro" id="IPR003959">
    <property type="entry name" value="ATPase_AAA_core"/>
</dbReference>
<dbReference type="InterPro" id="IPR003960">
    <property type="entry name" value="ATPase_AAA_CS"/>
</dbReference>
<dbReference type="InterPro" id="IPR014851">
    <property type="entry name" value="BCS1_N"/>
</dbReference>
<dbReference type="InterPro" id="IPR050747">
    <property type="entry name" value="Mitochondrial_chaperone_BCS1"/>
</dbReference>
<dbReference type="InterPro" id="IPR027417">
    <property type="entry name" value="P-loop_NTPase"/>
</dbReference>
<dbReference type="PANTHER" id="PTHR23070">
    <property type="entry name" value="BCS1 AAA-TYPE ATPASE"/>
    <property type="match status" value="1"/>
</dbReference>
<dbReference type="Pfam" id="PF00004">
    <property type="entry name" value="AAA"/>
    <property type="match status" value="1"/>
</dbReference>
<dbReference type="Pfam" id="PF25426">
    <property type="entry name" value="AAA_lid_BCS1"/>
    <property type="match status" value="1"/>
</dbReference>
<dbReference type="Pfam" id="PF08740">
    <property type="entry name" value="BCS1_N"/>
    <property type="match status" value="1"/>
</dbReference>
<dbReference type="SMART" id="SM00382">
    <property type="entry name" value="AAA"/>
    <property type="match status" value="1"/>
</dbReference>
<dbReference type="SMART" id="SM01024">
    <property type="entry name" value="BCS1_N"/>
    <property type="match status" value="1"/>
</dbReference>
<dbReference type="SUPFAM" id="SSF52540">
    <property type="entry name" value="P-loop containing nucleoside triphosphate hydrolases"/>
    <property type="match status" value="1"/>
</dbReference>
<dbReference type="PROSITE" id="PS00674">
    <property type="entry name" value="AAA"/>
    <property type="match status" value="1"/>
</dbReference>
<organism>
    <name type="scientific">Homo sapiens</name>
    <name type="common">Human</name>
    <dbReference type="NCBI Taxonomy" id="9606"/>
    <lineage>
        <taxon>Eukaryota</taxon>
        <taxon>Metazoa</taxon>
        <taxon>Chordata</taxon>
        <taxon>Craniata</taxon>
        <taxon>Vertebrata</taxon>
        <taxon>Euteleostomi</taxon>
        <taxon>Mammalia</taxon>
        <taxon>Eutheria</taxon>
        <taxon>Euarchontoglires</taxon>
        <taxon>Primates</taxon>
        <taxon>Haplorrhini</taxon>
        <taxon>Catarrhini</taxon>
        <taxon>Hominidae</taxon>
        <taxon>Homo</taxon>
    </lineage>
</organism>
<accession>Q9Y276</accession>
<accession>B3KTW9</accession>
<accession>Q7Z2V7</accession>
<sequence>MPLSDFILALKDNPYFGAGFGLVGVGTALALARKGVQLGLVAFRRHYMITLEVPARDRSYAWLLSWLTRHSTRTQHLSVETSYLQHESGRISTKFEFVPSPGNHFIWYRGKWIRVERSREMQMIDLQTGTPWESVTFTALGTDRKVFFNILEEARELALQQEEGKTVMYTAVGSEWRPFGYPRRRRPLNSVVLQQGLADRIVRDVQEFIDNPKWYTDRGIPYRRGYLLYGPPGCGKSSFITALAGELEHSICLLSLTDSSLSDDRLNHLLSVAPQQSLVLLEDVDAAFLSRDLAVENPVKYQGLGRLTFSGLLNALDGVASTEARIVFMTTNHVDRLDPALIRPGRVDLKEYVGYCSHWQLTQMFQRFYPGQAPSLAENFAEHVLRATNQISPAQVQGYFMLYKNDPVGAIHNAESLRR</sequence>
<reference key="1">
    <citation type="journal article" date="1998" name="Genomics">
        <title>Identification and characterization of human cDNAs specific to BCS1, PET112, SCO1, COX15, and COX11, five genes involved in the formation and function of the mitochondrial respiratory chain.</title>
        <authorList>
            <person name="Petruzzella V."/>
            <person name="Tiranti V."/>
            <person name="Fernandez P."/>
            <person name="Ianna P."/>
            <person name="Carrozzo R."/>
            <person name="Zeviani M."/>
        </authorList>
    </citation>
    <scope>NUCLEOTIDE SEQUENCE [MRNA]</scope>
    <scope>FUNCTION</scope>
    <scope>SUBCELLULAR LOCATION</scope>
    <scope>TISSUE SPECIFICITY</scope>
    <source>
        <tissue>Brain</tissue>
    </source>
</reference>
<reference key="2">
    <citation type="journal article" date="2001" name="Nat. Genet.">
        <title>A mutant mitochondrial respiratory chain assembly protein causes complex III deficiency in patients with tubulopathy, encephalopathy and liver failure.</title>
        <authorList>
            <person name="de Lonlay P."/>
            <person name="Valnot I."/>
            <person name="Barrientos A."/>
            <person name="Gorbatyuk M."/>
            <person name="Tzagoloff A."/>
            <person name="Taanman J.-W."/>
            <person name="Benayoun E."/>
            <person name="Chretien D."/>
            <person name="Kadhom N."/>
            <person name="Lombes A."/>
            <person name="Ogier de Baulny H."/>
            <person name="Niaudet P."/>
            <person name="Munnich A."/>
            <person name="Rustin P."/>
            <person name="Roetig A."/>
        </authorList>
    </citation>
    <scope>NUCLEOTIDE SEQUENCE [MRNA]</scope>
    <scope>FUNCTION</scope>
    <scope>VARIANTS MC3DN1 LEU-99; PRO-155; ASN-277 AND MET-353</scope>
</reference>
<reference key="3">
    <citation type="journal article" date="2002" name="Am. J. Hum. Genet.">
        <title>GRACILE syndrome, a lethal metabolic disorder with iron overload, is caused by a point mutation in BCS1L.</title>
        <authorList>
            <person name="Visapaeae I."/>
            <person name="Fellman V."/>
            <person name="Vesa J."/>
            <person name="Dasvarma A."/>
            <person name="Hutton J.L."/>
            <person name="Kumar V."/>
            <person name="Payne G.S."/>
            <person name="Makarow M."/>
            <person name="Van Coster R."/>
            <person name="Taylor R.W."/>
            <person name="Turnbull D.M."/>
            <person name="Suomalainen A."/>
            <person name="Peltonen L."/>
        </authorList>
    </citation>
    <scope>NUCLEOTIDE SEQUENCE [GENOMIC DNA / MRNA]</scope>
    <scope>VARIANTS GRACILE GLY-78; GLN-144 AND ALA-327</scope>
</reference>
<reference key="4">
    <citation type="journal article" date="1997" name="Genome Res.">
        <title>Large-scale concatenation cDNA sequencing.</title>
        <authorList>
            <person name="Yu W."/>
            <person name="Andersson B."/>
            <person name="Worley K.C."/>
            <person name="Muzny D.M."/>
            <person name="Ding Y."/>
            <person name="Liu W."/>
            <person name="Ricafrente J.Y."/>
            <person name="Wentland M.A."/>
            <person name="Lennon G."/>
            <person name="Gibbs R.A."/>
        </authorList>
    </citation>
    <scope>NUCLEOTIDE SEQUENCE [LARGE SCALE MRNA]</scope>
    <source>
        <tissue>Brain</tissue>
    </source>
</reference>
<reference key="5">
    <citation type="journal article" date="2004" name="Nat. Genet.">
        <title>Complete sequencing and characterization of 21,243 full-length human cDNAs.</title>
        <authorList>
            <person name="Ota T."/>
            <person name="Suzuki Y."/>
            <person name="Nishikawa T."/>
            <person name="Otsuki T."/>
            <person name="Sugiyama T."/>
            <person name="Irie R."/>
            <person name="Wakamatsu A."/>
            <person name="Hayashi K."/>
            <person name="Sato H."/>
            <person name="Nagai K."/>
            <person name="Kimura K."/>
            <person name="Makita H."/>
            <person name="Sekine M."/>
            <person name="Obayashi M."/>
            <person name="Nishi T."/>
            <person name="Shibahara T."/>
            <person name="Tanaka T."/>
            <person name="Ishii S."/>
            <person name="Yamamoto J."/>
            <person name="Saito K."/>
            <person name="Kawai Y."/>
            <person name="Isono Y."/>
            <person name="Nakamura Y."/>
            <person name="Nagahari K."/>
            <person name="Murakami K."/>
            <person name="Yasuda T."/>
            <person name="Iwayanagi T."/>
            <person name="Wagatsuma M."/>
            <person name="Shiratori A."/>
            <person name="Sudo H."/>
            <person name="Hosoiri T."/>
            <person name="Kaku Y."/>
            <person name="Kodaira H."/>
            <person name="Kondo H."/>
            <person name="Sugawara M."/>
            <person name="Takahashi M."/>
            <person name="Kanda K."/>
            <person name="Yokoi T."/>
            <person name="Furuya T."/>
            <person name="Kikkawa E."/>
            <person name="Omura Y."/>
            <person name="Abe K."/>
            <person name="Kamihara K."/>
            <person name="Katsuta N."/>
            <person name="Sato K."/>
            <person name="Tanikawa M."/>
            <person name="Yamazaki M."/>
            <person name="Ninomiya K."/>
            <person name="Ishibashi T."/>
            <person name="Yamashita H."/>
            <person name="Murakawa K."/>
            <person name="Fujimori K."/>
            <person name="Tanai H."/>
            <person name="Kimata M."/>
            <person name="Watanabe M."/>
            <person name="Hiraoka S."/>
            <person name="Chiba Y."/>
            <person name="Ishida S."/>
            <person name="Ono Y."/>
            <person name="Takiguchi S."/>
            <person name="Watanabe S."/>
            <person name="Yosida M."/>
            <person name="Hotuta T."/>
            <person name="Kusano J."/>
            <person name="Kanehori K."/>
            <person name="Takahashi-Fujii A."/>
            <person name="Hara H."/>
            <person name="Tanase T.-O."/>
            <person name="Nomura Y."/>
            <person name="Togiya S."/>
            <person name="Komai F."/>
            <person name="Hara R."/>
            <person name="Takeuchi K."/>
            <person name="Arita M."/>
            <person name="Imose N."/>
            <person name="Musashino K."/>
            <person name="Yuuki H."/>
            <person name="Oshima A."/>
            <person name="Sasaki N."/>
            <person name="Aotsuka S."/>
            <person name="Yoshikawa Y."/>
            <person name="Matsunawa H."/>
            <person name="Ichihara T."/>
            <person name="Shiohata N."/>
            <person name="Sano S."/>
            <person name="Moriya S."/>
            <person name="Momiyama H."/>
            <person name="Satoh N."/>
            <person name="Takami S."/>
            <person name="Terashima Y."/>
            <person name="Suzuki O."/>
            <person name="Nakagawa S."/>
            <person name="Senoh A."/>
            <person name="Mizoguchi H."/>
            <person name="Goto Y."/>
            <person name="Shimizu F."/>
            <person name="Wakebe H."/>
            <person name="Hishigaki H."/>
            <person name="Watanabe T."/>
            <person name="Sugiyama A."/>
            <person name="Takemoto M."/>
            <person name="Kawakami B."/>
            <person name="Yamazaki M."/>
            <person name="Watanabe K."/>
            <person name="Kumagai A."/>
            <person name="Itakura S."/>
            <person name="Fukuzumi Y."/>
            <person name="Fujimori Y."/>
            <person name="Komiyama M."/>
            <person name="Tashiro H."/>
            <person name="Tanigami A."/>
            <person name="Fujiwara T."/>
            <person name="Ono T."/>
            <person name="Yamada K."/>
            <person name="Fujii Y."/>
            <person name="Ozaki K."/>
            <person name="Hirao M."/>
            <person name="Ohmori Y."/>
            <person name="Kawabata A."/>
            <person name="Hikiji T."/>
            <person name="Kobatake N."/>
            <person name="Inagaki H."/>
            <person name="Ikema Y."/>
            <person name="Okamoto S."/>
            <person name="Okitani R."/>
            <person name="Kawakami T."/>
            <person name="Noguchi S."/>
            <person name="Itoh T."/>
            <person name="Shigeta K."/>
            <person name="Senba T."/>
            <person name="Matsumura K."/>
            <person name="Nakajima Y."/>
            <person name="Mizuno T."/>
            <person name="Morinaga M."/>
            <person name="Sasaki M."/>
            <person name="Togashi T."/>
            <person name="Oyama M."/>
            <person name="Hata H."/>
            <person name="Watanabe M."/>
            <person name="Komatsu T."/>
            <person name="Mizushima-Sugano J."/>
            <person name="Satoh T."/>
            <person name="Shirai Y."/>
            <person name="Takahashi Y."/>
            <person name="Nakagawa K."/>
            <person name="Okumura K."/>
            <person name="Nagase T."/>
            <person name="Nomura N."/>
            <person name="Kikuchi H."/>
            <person name="Masuho Y."/>
            <person name="Yamashita R."/>
            <person name="Nakai K."/>
            <person name="Yada T."/>
            <person name="Nakamura Y."/>
            <person name="Ohara O."/>
            <person name="Isogai T."/>
            <person name="Sugano S."/>
        </authorList>
    </citation>
    <scope>NUCLEOTIDE SEQUENCE [LARGE SCALE MRNA]</scope>
</reference>
<reference key="6">
    <citation type="journal article" date="2007" name="BMC Genomics">
        <title>The full-ORF clone resource of the German cDNA consortium.</title>
        <authorList>
            <person name="Bechtel S."/>
            <person name="Rosenfelder H."/>
            <person name="Duda A."/>
            <person name="Schmidt C.P."/>
            <person name="Ernst U."/>
            <person name="Wellenreuther R."/>
            <person name="Mehrle A."/>
            <person name="Schuster C."/>
            <person name="Bahr A."/>
            <person name="Bloecker H."/>
            <person name="Heubner D."/>
            <person name="Hoerlein A."/>
            <person name="Michel G."/>
            <person name="Wedler H."/>
            <person name="Koehrer K."/>
            <person name="Ottenwaelder B."/>
            <person name="Poustka A."/>
            <person name="Wiemann S."/>
            <person name="Schupp I."/>
        </authorList>
    </citation>
    <scope>NUCLEOTIDE SEQUENCE [LARGE SCALE MRNA]</scope>
    <source>
        <tissue>Small intestine</tissue>
    </source>
</reference>
<reference key="7">
    <citation type="submission" date="2005-07" db="EMBL/GenBank/DDBJ databases">
        <authorList>
            <person name="Mural R.J."/>
            <person name="Istrail S."/>
            <person name="Sutton G.G."/>
            <person name="Florea L."/>
            <person name="Halpern A.L."/>
            <person name="Mobarry C.M."/>
            <person name="Lippert R."/>
            <person name="Walenz B."/>
            <person name="Shatkay H."/>
            <person name="Dew I."/>
            <person name="Miller J.R."/>
            <person name="Flanigan M.J."/>
            <person name="Edwards N.J."/>
            <person name="Bolanos R."/>
            <person name="Fasulo D."/>
            <person name="Halldorsson B.V."/>
            <person name="Hannenhalli S."/>
            <person name="Turner R."/>
            <person name="Yooseph S."/>
            <person name="Lu F."/>
            <person name="Nusskern D.R."/>
            <person name="Shue B.C."/>
            <person name="Zheng X.H."/>
            <person name="Zhong F."/>
            <person name="Delcher A.L."/>
            <person name="Huson D.H."/>
            <person name="Kravitz S.A."/>
            <person name="Mouchard L."/>
            <person name="Reinert K."/>
            <person name="Remington K.A."/>
            <person name="Clark A.G."/>
            <person name="Waterman M.S."/>
            <person name="Eichler E.E."/>
            <person name="Adams M.D."/>
            <person name="Hunkapiller M.W."/>
            <person name="Myers E.W."/>
            <person name="Venter J.C."/>
        </authorList>
    </citation>
    <scope>NUCLEOTIDE SEQUENCE [LARGE SCALE GENOMIC DNA]</scope>
</reference>
<reference key="8">
    <citation type="journal article" date="2004" name="Genome Res.">
        <title>The status, quality, and expansion of the NIH full-length cDNA project: the Mammalian Gene Collection (MGC).</title>
        <authorList>
            <consortium name="The MGC Project Team"/>
        </authorList>
    </citation>
    <scope>NUCLEOTIDE SEQUENCE [LARGE SCALE MRNA]</scope>
    <source>
        <tissue>Muscle</tissue>
    </source>
</reference>
<reference key="9">
    <citation type="journal article" date="2008" name="J. Cell Sci.">
        <title>Characterization of the mitochondrial protein LETM1, which maintains the mitochondrial tubular shapes and interacts with the AAA-ATPase BCS1L.</title>
        <authorList>
            <person name="Tamai S."/>
            <person name="Iida H."/>
            <person name="Yokota S."/>
            <person name="Sayano T."/>
            <person name="Kiguchiya S."/>
            <person name="Ishihara N."/>
            <person name="Hayashi J."/>
            <person name="Mihara K."/>
            <person name="Oka T."/>
        </authorList>
    </citation>
    <scope>INTERACTION WITH LETM1</scope>
    <scope>FUNCTION</scope>
    <scope>SUBCELLULAR LOCATION</scope>
    <scope>CHARACTERIZATION OF VARIANT MC3DN1 PRO-155</scope>
</reference>
<reference key="10">
    <citation type="journal article" date="2011" name="BMC Syst. Biol.">
        <title>Initial characterization of the human central proteome.</title>
        <authorList>
            <person name="Burkard T.R."/>
            <person name="Planyavsky M."/>
            <person name="Kaupe I."/>
            <person name="Breitwieser F.P."/>
            <person name="Buerckstuemmer T."/>
            <person name="Bennett K.L."/>
            <person name="Superti-Furga G."/>
            <person name="Colinge J."/>
        </authorList>
    </citation>
    <scope>IDENTIFICATION BY MASS SPECTROMETRY [LARGE SCALE ANALYSIS]</scope>
</reference>
<reference key="11">
    <citation type="journal article" date="2013" name="J. Proteome Res.">
        <title>Toward a comprehensive characterization of a human cancer cell phosphoproteome.</title>
        <authorList>
            <person name="Zhou H."/>
            <person name="Di Palma S."/>
            <person name="Preisinger C."/>
            <person name="Peng M."/>
            <person name="Polat A.N."/>
            <person name="Heck A.J."/>
            <person name="Mohammed S."/>
        </authorList>
    </citation>
    <scope>PHOSPHORYLATION [LARGE SCALE ANALYSIS] AT TYR-181</scope>
    <scope>IDENTIFICATION BY MASS SPECTROMETRY [LARGE SCALE ANALYSIS]</scope>
    <source>
        <tissue>Erythroleukemia</tissue>
    </source>
</reference>
<reference key="12">
    <citation type="journal article" date="2015" name="Proteomics">
        <title>N-terminome analysis of the human mitochondrial proteome.</title>
        <authorList>
            <person name="Vaca Jacome A.S."/>
            <person name="Rabilloud T."/>
            <person name="Schaeffer-Reiss C."/>
            <person name="Rompais M."/>
            <person name="Ayoub D."/>
            <person name="Lane L."/>
            <person name="Bairoch A."/>
            <person name="Van Dorsselaer A."/>
            <person name="Carapito C."/>
        </authorList>
    </citation>
    <scope>CLEAVAGE OF INITIATOR METHIONINE [LARGE SCALE ANALYSIS]</scope>
    <scope>IDENTIFICATION BY MASS SPECTROMETRY [LARGE SCALE ANALYSIS]</scope>
</reference>
<reference key="13">
    <citation type="journal article" date="2003" name="Am. J. Med. Genet. A">
        <title>Clinical and diagnostic characteristics of complex III deficiency due to mutations in the BCS1L gene.</title>
        <authorList>
            <person name="De Meirleir L."/>
            <person name="Seneca S."/>
            <person name="Damis E."/>
            <person name="Sepulchre B."/>
            <person name="Hoorens A."/>
            <person name="Gerlo E."/>
            <person name="Garcia Silva M.T."/>
            <person name="Hernandez E.M."/>
            <person name="Lissens W."/>
            <person name="Van Coster R."/>
        </authorList>
    </citation>
    <scope>VARIANT MC3DN1 CYS-45</scope>
</reference>
<reference key="14">
    <citation type="journal article" date="2007" name="Hum. Mol. Genet.">
        <title>Impaired complex III assembly associated with BCS1L gene mutations in isolated mitochondrial encephalopathy.</title>
        <authorList>
            <person name="Fernandez-Vizarra E."/>
            <person name="Bugiani M."/>
            <person name="Goffrini P."/>
            <person name="Carrara F."/>
            <person name="Farina L."/>
            <person name="Procopio E."/>
            <person name="Donati A."/>
            <person name="Uziel G."/>
            <person name="Ferrero I."/>
            <person name="Zeviani M."/>
        </authorList>
    </citation>
    <scope>VARIANTS MC3DN1 CYS-73; CYS-183; CYS-184 AND ILE-368</scope>
</reference>
<reference key="15">
    <citation type="journal article" date="2007" name="N. Engl. J. Med.">
        <title>Missense mutations in the BCS1L gene as a cause of the Bjoernstad syndrome.</title>
        <authorList>
            <person name="Hinson J.T."/>
            <person name="Fantin V.R."/>
            <person name="Schoenberger J."/>
            <person name="Breivik N."/>
            <person name="Siem G."/>
            <person name="McDonough B."/>
            <person name="Sharma P."/>
            <person name="Keogh I."/>
            <person name="Godinho R."/>
            <person name="Santos F."/>
            <person name="Esparza A."/>
            <person name="Nicolau Y."/>
            <person name="Selvaag E."/>
            <person name="Cohen B.H."/>
            <person name="Hoppel C.L."/>
            <person name="Tranebjaerg L."/>
            <person name="Eavey R.D."/>
            <person name="Seidman J.G."/>
            <person name="Seidman C.E."/>
        </authorList>
    </citation>
    <scope>VARIANTS BJS ARG-35; TRP-114; HIS-183; CYS-184; GLU-302 AND HIS-306</scope>
    <scope>VARIANTS MC3DN1 LEU-99; PRO-155; ASN-277 AND MET-353</scope>
    <scope>VARIANTS GRACILE GLY-78; GLN-144 AND ALA-327</scope>
</reference>
<reference key="16">
    <citation type="journal article" date="2009" name="Neuromuscul. Disord.">
        <title>Infantile mitochondrial encephalomyopathy with unusual phenotype caused by a novel BCS1L mutation in an isolated complex III-deficient patient.</title>
        <authorList>
            <person name="Blazquez A."/>
            <person name="Gil-Borlado M.C."/>
            <person name="Moran M."/>
            <person name="Verdu A."/>
            <person name="Cazorla-Calleja M.R."/>
            <person name="Martin M.A."/>
            <person name="Arenas J."/>
            <person name="Ugalde C."/>
        </authorList>
    </citation>
    <scope>VARIANT MC3DN1 ALA-50</scope>
</reference>
<reference key="17">
    <citation type="journal article" date="2013" name="J. Hum. Genet.">
        <title>Novel mutation in AAA domain of BCS1L causing Bjornstad syndrome.</title>
        <authorList>
            <person name="Siddiqi S."/>
            <person name="Siddiq S."/>
            <person name="Mansoor A."/>
            <person name="Oostrik J."/>
            <person name="Ahmad N."/>
            <person name="Kazmi S.A."/>
            <person name="Kremer H."/>
            <person name="Qamar R."/>
            <person name="Schraders M."/>
        </authorList>
    </citation>
    <scope>VARIANT BJS ASN-301</scope>
</reference>
<reference key="18">
    <citation type="journal article" date="2013" name="J. Inherit. Metab. Dis.">
        <title>Clinical and biochemical features associated with BCS1L mutation.</title>
        <authorList>
            <person name="Al-Owain M."/>
            <person name="Colak D."/>
            <person name="Albakheet A."/>
            <person name="Al-Younes B."/>
            <person name="Al-Humaidi Z."/>
            <person name="Al-Sayed M."/>
            <person name="Al-Hindi H."/>
            <person name="Al-Sugair A."/>
            <person name="Al-Muhaideb A."/>
            <person name="Rahbeeni Z."/>
            <person name="Al-Sehli A."/>
            <person name="Al-Fadhli F."/>
            <person name="Ozand P.T."/>
            <person name="Taylor R.W."/>
            <person name="Kaya N."/>
        </authorList>
    </citation>
    <scope>VARIANT MC3DN1 ARG-129</scope>
</reference>
<reference key="19">
    <citation type="journal article" date="2024" name="Am. J. Hum. Genet.">
        <title>Bi-allelic variants in SNF8 cause a disease spectrum ranging from severe developmental and epileptic encephalopathy to syndromic optic atrophy.</title>
        <authorList>
            <person name="Brugger M."/>
            <person name="Lauri A."/>
            <person name="Zhen Y."/>
            <person name="Gramegna L.L."/>
            <person name="Zott B."/>
            <person name="Sekulic N."/>
            <person name="Fasano G."/>
            <person name="Kopajtich R."/>
            <person name="Cordeddu V."/>
            <person name="Radio F.C."/>
            <person name="Mancini C."/>
            <person name="Pizzi S."/>
            <person name="Paradisi G."/>
            <person name="Zanni G."/>
            <person name="Vasco G."/>
            <person name="Carrozzo R."/>
            <person name="Palombo F."/>
            <person name="Tonon C."/>
            <person name="Lodi R."/>
            <person name="La Morgia C."/>
            <person name="Arelin M."/>
            <person name="Blechschmidt C."/>
            <person name="Finck T."/>
            <person name="Soerensen V."/>
            <person name="Kreiser K."/>
            <person name="Strobl-Wildemann G."/>
            <person name="Daum H."/>
            <person name="Michaelson-Cohen R."/>
            <person name="Ziccardi L."/>
            <person name="Zampino G."/>
            <person name="Prokisch H."/>
            <person name="Abou Jamra R."/>
            <person name="Fiorini C."/>
            <person name="Arzberger T."/>
            <person name="Winkelmann J."/>
            <person name="Caporali L."/>
            <person name="Carelli V."/>
            <person name="Stenmark H."/>
            <person name="Tartaglia M."/>
            <person name="Wagner M."/>
        </authorList>
    </citation>
    <scope>VARIANT MC3DN1 GLY-78</scope>
</reference>
<keyword id="KW-0067">ATP-binding</keyword>
<keyword id="KW-0143">Chaperone</keyword>
<keyword id="KW-0209">Deafness</keyword>
<keyword id="KW-0225">Disease variant</keyword>
<keyword id="KW-0378">Hydrolase</keyword>
<keyword id="KW-0472">Membrane</keyword>
<keyword id="KW-0496">Mitochondrion</keyword>
<keyword id="KW-0999">Mitochondrion inner membrane</keyword>
<keyword id="KW-0547">Nucleotide-binding</keyword>
<keyword id="KW-0597">Phosphoprotein</keyword>
<keyword id="KW-1274">Primary mitochondrial disease</keyword>
<keyword id="KW-1267">Proteomics identification</keyword>
<keyword id="KW-1185">Reference proteome</keyword>
<keyword id="KW-0812">Transmembrane</keyword>
<keyword id="KW-1133">Transmembrane helix</keyword>
<comment type="function">
    <text evidence="3 8 13">Chaperone necessary for the incorporation of Rieske iron-sulfur protein UQCRFS1 into the mitochondrial respiratory chain complex III (PubMed:11528392, PubMed:9878253). Plays an important role in the maintenance of mitochondrial tubular networks, respiratory chain assembly and formation of the LETM1 complex (PubMed:18628306).</text>
</comment>
<comment type="catalytic activity">
    <reaction evidence="1">
        <text>ATP + H2O = ADP + phosphate + H(+)</text>
        <dbReference type="Rhea" id="RHEA:13065"/>
        <dbReference type="ChEBI" id="CHEBI:15377"/>
        <dbReference type="ChEBI" id="CHEBI:15378"/>
        <dbReference type="ChEBI" id="CHEBI:30616"/>
        <dbReference type="ChEBI" id="CHEBI:43474"/>
        <dbReference type="ChEBI" id="CHEBI:456216"/>
    </reaction>
    <physiologicalReaction direction="left-to-right" evidence="1">
        <dbReference type="Rhea" id="RHEA:13066"/>
    </physiologicalReaction>
</comment>
<comment type="subunit">
    <text evidence="8">Interacts with LETM1.</text>
</comment>
<comment type="interaction">
    <interactant intactId="EBI-719257">
        <id>Q9Y276</id>
    </interactant>
    <interactant intactId="EBI-21518272">
        <id>Q6PCB8</id>
        <label>EMB</label>
    </interactant>
    <organismsDiffer>false</organismsDiffer>
    <experiments>2</experiments>
</comment>
<comment type="interaction">
    <interactant intactId="EBI-719257">
        <id>Q9Y276</id>
    </interactant>
    <interactant intactId="EBI-929476">
        <id>P20591</id>
        <label>MX1</label>
    </interactant>
    <organismsDiffer>false</organismsDiffer>
    <experiments>2</experiments>
</comment>
<comment type="subcellular location">
    <subcellularLocation>
        <location evidence="8 13">Mitochondrion inner membrane</location>
        <topology evidence="2">Single-pass membrane protein</topology>
    </subcellularLocation>
</comment>
<comment type="tissue specificity">
    <text evidence="13">Ubiquitous.</text>
</comment>
<comment type="disease" evidence="4 6">
    <disease id="DI-01684">
        <name>GRACILE syndrome</name>
        <acronym>GRACILE</acronym>
        <description>GRACILE stands for 'growth retardation, aminoaciduria, cholestasis, iron overload, lactic acidosis, and early death'. It is a recessively inherited lethal disease characterized by fetal growth retardation, lactic acidosis, aminoaciduria, cholestasis, and abnormalities in iron metabolism.</description>
        <dbReference type="MIM" id="603358"/>
    </disease>
    <text>The disease is caused by variants affecting the gene represented in this entry.</text>
</comment>
<comment type="disease" evidence="3 5 6 7 8 9 10 12">
    <disease id="DI-01982">
        <name>Mitochondrial complex III deficiency, nuclear type 1</name>
        <acronym>MC3DN1</acronym>
        <description>A disorder of the mitochondrial respiratory chain resulting in a highly variable phenotype depending on which tissues are affected. Clinical features include mitochondrial encephalopathy, psychomotor retardation, ataxia, severe failure to thrive, liver dysfunction, renal tubulopathy, muscle weakness and exercise intolerance.</description>
        <dbReference type="MIM" id="124000"/>
    </disease>
    <text>The disease is caused by variants affecting the gene represented in this entry.</text>
</comment>
<comment type="disease" evidence="6 11">
    <disease id="DI-01285">
        <name>Bjoernstad syndrome</name>
        <acronym>BJS</acronym>
        <description>An autosomal recessive disease characterized by congenital sensorineural hearing loss and twisted hairs (pili torti). Pili torti is a condition in which the hair shafts are flattened at irregular intervals and twisted 180 degrees from the normal axis, making the hair extremely brittle.</description>
        <dbReference type="MIM" id="262000"/>
    </disease>
    <text>The disease is caused by variants affecting the gene represented in this entry.</text>
</comment>
<comment type="similarity">
    <text evidence="15">Belongs to the AAA ATPase family. BCS1 subfamily.</text>
</comment>
<name>BCS1_HUMAN</name>
<evidence type="ECO:0000250" key="1">
    <source>
        <dbReference type="UniProtKB" id="P32839"/>
    </source>
</evidence>
<evidence type="ECO:0000255" key="2"/>
<evidence type="ECO:0000269" key="3">
    <source>
    </source>
</evidence>
<evidence type="ECO:0000269" key="4">
    <source>
    </source>
</evidence>
<evidence type="ECO:0000269" key="5">
    <source>
    </source>
</evidence>
<evidence type="ECO:0000269" key="6">
    <source>
    </source>
</evidence>
<evidence type="ECO:0000269" key="7">
    <source>
    </source>
</evidence>
<evidence type="ECO:0000269" key="8">
    <source>
    </source>
</evidence>
<evidence type="ECO:0000269" key="9">
    <source>
    </source>
</evidence>
<evidence type="ECO:0000269" key="10">
    <source>
    </source>
</evidence>
<evidence type="ECO:0000269" key="11">
    <source>
    </source>
</evidence>
<evidence type="ECO:0000269" key="12">
    <source>
    </source>
</evidence>
<evidence type="ECO:0000269" key="13">
    <source>
    </source>
</evidence>
<evidence type="ECO:0000303" key="14">
    <source>
    </source>
</evidence>
<evidence type="ECO:0000305" key="15"/>
<evidence type="ECO:0007744" key="16">
    <source>
    </source>
</evidence>
<evidence type="ECO:0007744" key="17">
    <source>
    </source>
</evidence>
<protein>
    <recommendedName>
        <fullName evidence="14">Mitochondrial chaperone BCS1</fullName>
        <shortName>h-BCS1</shortName>
        <ecNumber evidence="1">3.6.1.-</ecNumber>
    </recommendedName>
    <alternativeName>
        <fullName>BCS1-like protein</fullName>
    </alternativeName>
</protein>